<keyword id="KW-0472">Membrane</keyword>
<keyword id="KW-0520">NAD</keyword>
<keyword id="KW-0521">NADP</keyword>
<keyword id="KW-0618">Plastoquinone</keyword>
<keyword id="KW-0874">Quinone</keyword>
<keyword id="KW-1185">Reference proteome</keyword>
<keyword id="KW-0793">Thylakoid</keyword>
<keyword id="KW-1278">Translocase</keyword>
<keyword id="KW-0813">Transport</keyword>
<protein>
    <recommendedName>
        <fullName evidence="1">NAD(P)H-quinone oxidoreductase subunit J</fullName>
        <ecNumber evidence="1">7.1.1.-</ecNumber>
    </recommendedName>
    <alternativeName>
        <fullName>NAD(P)H dehydrogenase subunit J</fullName>
    </alternativeName>
    <alternativeName>
        <fullName evidence="1">NADH-plastoquinone oxidoreductase subunit J</fullName>
    </alternativeName>
    <alternativeName>
        <fullName evidence="1">NDH-1 subunit J</fullName>
        <shortName evidence="1">NDH-J</shortName>
    </alternativeName>
</protein>
<name>NDHJ_SYNS9</name>
<sequence length="193" mass="21693">MSDSAPTNPTPTNPAPEESASAVATLEPGPVSQWLNTQGFDHDVLDPDHVGVEQIGVESAVLPIIVAAIKSHGFDYLQCQGGYDEGPGERLVCFYHFIAMAEQVEAMTAGRPHELREVRLKVFLSREGTPSLPSIYGLFRGADWQERETFDMYGIEFEGHPHPKRLLMPEDWKGWPLRKDYVQPDFYEMQDAF</sequence>
<comment type="function">
    <text evidence="1">NDH-1 shuttles electrons from an unknown electron donor, via FMN and iron-sulfur (Fe-S) centers, to quinones in the respiratory and/or the photosynthetic chain. The immediate electron acceptor for the enzyme in this species is believed to be plastoquinone. Couples the redox reaction to proton translocation, and thus conserves the redox energy in a proton gradient. Cyanobacterial NDH-1 also plays a role in inorganic carbon-concentration.</text>
</comment>
<comment type="catalytic activity">
    <reaction evidence="1">
        <text>a plastoquinone + NADH + (n+1) H(+)(in) = a plastoquinol + NAD(+) + n H(+)(out)</text>
        <dbReference type="Rhea" id="RHEA:42608"/>
        <dbReference type="Rhea" id="RHEA-COMP:9561"/>
        <dbReference type="Rhea" id="RHEA-COMP:9562"/>
        <dbReference type="ChEBI" id="CHEBI:15378"/>
        <dbReference type="ChEBI" id="CHEBI:17757"/>
        <dbReference type="ChEBI" id="CHEBI:57540"/>
        <dbReference type="ChEBI" id="CHEBI:57945"/>
        <dbReference type="ChEBI" id="CHEBI:62192"/>
    </reaction>
</comment>
<comment type="catalytic activity">
    <reaction evidence="1">
        <text>a plastoquinone + NADPH + (n+1) H(+)(in) = a plastoquinol + NADP(+) + n H(+)(out)</text>
        <dbReference type="Rhea" id="RHEA:42612"/>
        <dbReference type="Rhea" id="RHEA-COMP:9561"/>
        <dbReference type="Rhea" id="RHEA-COMP:9562"/>
        <dbReference type="ChEBI" id="CHEBI:15378"/>
        <dbReference type="ChEBI" id="CHEBI:17757"/>
        <dbReference type="ChEBI" id="CHEBI:57783"/>
        <dbReference type="ChEBI" id="CHEBI:58349"/>
        <dbReference type="ChEBI" id="CHEBI:62192"/>
    </reaction>
</comment>
<comment type="subunit">
    <text evidence="1">NDH-1 can be composed of about 15 different subunits; different subcomplexes with different compositions have been identified which probably have different functions.</text>
</comment>
<comment type="subcellular location">
    <subcellularLocation>
        <location evidence="1">Cellular thylakoid membrane</location>
        <topology evidence="1">Peripheral membrane protein</topology>
        <orientation evidence="1">Cytoplasmic side</orientation>
    </subcellularLocation>
</comment>
<comment type="similarity">
    <text evidence="1">Belongs to the complex I 30 kDa subunit family.</text>
</comment>
<feature type="chain" id="PRO_0000358209" description="NAD(P)H-quinone oxidoreductase subunit J">
    <location>
        <begin position="1"/>
        <end position="193"/>
    </location>
</feature>
<feature type="region of interest" description="Disordered" evidence="2">
    <location>
        <begin position="1"/>
        <end position="21"/>
    </location>
</feature>
<accession>Q3B0C1</accession>
<reference key="1">
    <citation type="submission" date="2005-08" db="EMBL/GenBank/DDBJ databases">
        <title>Complete sequence of Synechococcus sp. CC9902.</title>
        <authorList>
            <person name="Copeland A."/>
            <person name="Lucas S."/>
            <person name="Lapidus A."/>
            <person name="Barry K."/>
            <person name="Detter J.C."/>
            <person name="Glavina T."/>
            <person name="Hammon N."/>
            <person name="Israni S."/>
            <person name="Pitluck S."/>
            <person name="Martinez M."/>
            <person name="Schmutz J."/>
            <person name="Larimer F."/>
            <person name="Land M."/>
            <person name="Kyrpides N."/>
            <person name="Ivanova N."/>
            <person name="Richardson P."/>
        </authorList>
    </citation>
    <scope>NUCLEOTIDE SEQUENCE [LARGE SCALE GENOMIC DNA]</scope>
    <source>
        <strain>CC9902</strain>
    </source>
</reference>
<dbReference type="EC" id="7.1.1.-" evidence="1"/>
<dbReference type="EMBL" id="CP000097">
    <property type="protein sequence ID" value="ABB25207.1"/>
    <property type="molecule type" value="Genomic_DNA"/>
</dbReference>
<dbReference type="RefSeq" id="WP_011359068.1">
    <property type="nucleotide sequence ID" value="NC_007513.1"/>
</dbReference>
<dbReference type="SMR" id="Q3B0C1"/>
<dbReference type="STRING" id="316279.Syncc9902_0232"/>
<dbReference type="KEGG" id="sye:Syncc9902_0232"/>
<dbReference type="eggNOG" id="COG0852">
    <property type="taxonomic scope" value="Bacteria"/>
</dbReference>
<dbReference type="HOGENOM" id="CLU_042628_9_1_3"/>
<dbReference type="OrthoDB" id="9803286at2"/>
<dbReference type="Proteomes" id="UP000002712">
    <property type="component" value="Chromosome"/>
</dbReference>
<dbReference type="GO" id="GO:0031676">
    <property type="term" value="C:plasma membrane-derived thylakoid membrane"/>
    <property type="evidence" value="ECO:0007669"/>
    <property type="project" value="UniProtKB-SubCell"/>
</dbReference>
<dbReference type="GO" id="GO:0008137">
    <property type="term" value="F:NADH dehydrogenase (ubiquinone) activity"/>
    <property type="evidence" value="ECO:0007669"/>
    <property type="project" value="InterPro"/>
</dbReference>
<dbReference type="GO" id="GO:0048038">
    <property type="term" value="F:quinone binding"/>
    <property type="evidence" value="ECO:0007669"/>
    <property type="project" value="UniProtKB-KW"/>
</dbReference>
<dbReference type="GO" id="GO:0019684">
    <property type="term" value="P:photosynthesis, light reaction"/>
    <property type="evidence" value="ECO:0007669"/>
    <property type="project" value="UniProtKB-UniRule"/>
</dbReference>
<dbReference type="Gene3D" id="3.30.460.80">
    <property type="entry name" value="NADH:ubiquinone oxidoreductase, 30kDa subunit"/>
    <property type="match status" value="1"/>
</dbReference>
<dbReference type="HAMAP" id="MF_01357">
    <property type="entry name" value="NDH1_NuoC"/>
    <property type="match status" value="1"/>
</dbReference>
<dbReference type="InterPro" id="IPR010218">
    <property type="entry name" value="NADH_DH_suC"/>
</dbReference>
<dbReference type="InterPro" id="IPR037232">
    <property type="entry name" value="NADH_quin_OxRdtase_su_C/D-like"/>
</dbReference>
<dbReference type="InterPro" id="IPR001268">
    <property type="entry name" value="NADH_UbQ_OxRdtase_30kDa_su"/>
</dbReference>
<dbReference type="InterPro" id="IPR020396">
    <property type="entry name" value="NADH_UbQ_OxRdtase_CS"/>
</dbReference>
<dbReference type="NCBIfam" id="NF009141">
    <property type="entry name" value="PRK12494.1"/>
    <property type="match status" value="1"/>
</dbReference>
<dbReference type="PANTHER" id="PTHR10884:SF14">
    <property type="entry name" value="NADH DEHYDROGENASE [UBIQUINONE] IRON-SULFUR PROTEIN 3, MITOCHONDRIAL"/>
    <property type="match status" value="1"/>
</dbReference>
<dbReference type="PANTHER" id="PTHR10884">
    <property type="entry name" value="NADH DEHYDROGENASE UBIQUINONE IRON-SULFUR PROTEIN 3"/>
    <property type="match status" value="1"/>
</dbReference>
<dbReference type="Pfam" id="PF00329">
    <property type="entry name" value="Complex1_30kDa"/>
    <property type="match status" value="1"/>
</dbReference>
<dbReference type="SUPFAM" id="SSF143243">
    <property type="entry name" value="Nqo5-like"/>
    <property type="match status" value="1"/>
</dbReference>
<dbReference type="PROSITE" id="PS00542">
    <property type="entry name" value="COMPLEX1_30K"/>
    <property type="match status" value="1"/>
</dbReference>
<proteinExistence type="inferred from homology"/>
<gene>
    <name evidence="1" type="primary">ndhJ</name>
    <name type="ordered locus">Syncc9902_0232</name>
</gene>
<organism>
    <name type="scientific">Synechococcus sp. (strain CC9902)</name>
    <dbReference type="NCBI Taxonomy" id="316279"/>
    <lineage>
        <taxon>Bacteria</taxon>
        <taxon>Bacillati</taxon>
        <taxon>Cyanobacteriota</taxon>
        <taxon>Cyanophyceae</taxon>
        <taxon>Synechococcales</taxon>
        <taxon>Synechococcaceae</taxon>
        <taxon>Synechococcus</taxon>
    </lineage>
</organism>
<evidence type="ECO:0000255" key="1">
    <source>
        <dbReference type="HAMAP-Rule" id="MF_01357"/>
    </source>
</evidence>
<evidence type="ECO:0000256" key="2">
    <source>
        <dbReference type="SAM" id="MobiDB-lite"/>
    </source>
</evidence>